<accession>P69945</accession>
<protein>
    <recommendedName>
        <fullName evidence="2">U-actitoxin-Aer2b</fullName>
        <shortName evidence="2">U-AITX-Aer2b</shortName>
    </recommendedName>
    <alternativeName>
        <fullName evidence="3">AETX III</fullName>
    </alternativeName>
    <alternativeName>
        <fullName evidence="4">Toxin AETX-3</fullName>
    </alternativeName>
</protein>
<feature type="chain" id="PRO_0000221545" description="U-actitoxin-Aer2b" evidence="1">
    <location>
        <begin position="1"/>
        <end position="59"/>
    </location>
</feature>
<name>AETX3_ANEER</name>
<keyword id="KW-0903">Direct protein sequencing</keyword>
<keyword id="KW-1015">Disulfide bond</keyword>
<keyword id="KW-0166">Nematocyst</keyword>
<keyword id="KW-0964">Secreted</keyword>
<keyword id="KW-0800">Toxin</keyword>
<proteinExistence type="evidence at protein level"/>
<organism>
    <name type="scientific">Anemonia erythraea</name>
    <name type="common">Sea anemone</name>
    <dbReference type="NCBI Taxonomy" id="48400"/>
    <lineage>
        <taxon>Eukaryota</taxon>
        <taxon>Metazoa</taxon>
        <taxon>Cnidaria</taxon>
        <taxon>Anthozoa</taxon>
        <taxon>Hexacorallia</taxon>
        <taxon>Actiniaria</taxon>
        <taxon>Actiniidae</taxon>
        <taxon>Anemonia</taxon>
    </lineage>
</organism>
<evidence type="ECO:0000269" key="1">
    <source>
    </source>
</evidence>
<evidence type="ECO:0000303" key="2">
    <source>
    </source>
</evidence>
<evidence type="ECO:0000303" key="3">
    <source>
    </source>
</evidence>
<evidence type="ECO:0000305" key="4"/>
<dbReference type="GO" id="GO:0005576">
    <property type="term" value="C:extracellular region"/>
    <property type="evidence" value="ECO:0007669"/>
    <property type="project" value="UniProtKB-SubCell"/>
</dbReference>
<dbReference type="GO" id="GO:0042151">
    <property type="term" value="C:nematocyst"/>
    <property type="evidence" value="ECO:0007669"/>
    <property type="project" value="UniProtKB-SubCell"/>
</dbReference>
<dbReference type="GO" id="GO:0090729">
    <property type="term" value="F:toxin activity"/>
    <property type="evidence" value="ECO:0007669"/>
    <property type="project" value="UniProtKB-KW"/>
</dbReference>
<reference key="1">
    <citation type="journal article" date="1997" name="Biochim. Biophys. Acta">
        <title>Novel polypeptide toxins with crab lethality from the sea anemone Anemonia erythraea.</title>
        <authorList>
            <person name="Shiomi K."/>
            <person name="Qian W.-H."/>
            <person name="Lin X.-Y."/>
            <person name="Shimakura K."/>
            <person name="Nagashima Y."/>
            <person name="Ishida M."/>
        </authorList>
    </citation>
    <scope>PROTEIN SEQUENCE</scope>
    <scope>MASS SPECTROMETRY</scope>
    <scope>TOXIC DOSE</scope>
    <source>
        <strain>Banda</strain>
        <strain>Chojagasaki</strain>
        <strain>Moroiso</strain>
        <tissue>Nematoblast</tissue>
    </source>
</reference>
<reference key="2">
    <citation type="journal article" date="2012" name="Toxicon">
        <title>Development of a rational nomenclature for naming peptide and protein toxins from sea anemones.</title>
        <authorList>
            <person name="Oliveira J.S."/>
            <person name="Fuentes-Silva D."/>
            <person name="King G.F."/>
        </authorList>
    </citation>
    <scope>NOMENCLATURE</scope>
</reference>
<comment type="subcellular location">
    <subcellularLocation>
        <location evidence="4">Secreted</location>
    </subcellularLocation>
    <subcellularLocation>
        <location evidence="4">Nematocyst</location>
    </subcellularLocation>
</comment>
<comment type="PTM">
    <text evidence="4">Contains 5 disulfide bonds.</text>
</comment>
<comment type="mass spectrometry"/>
<comment type="toxic dose">
    <text evidence="1">LD(50) is 0.28 ug/kg to crabs.</text>
</comment>
<sequence>GEIECRSSECCPSGKHLCEGGFVHYCCPNDRYMSCGFLGFGTCYCWKAAYYEYGSTPTC</sequence>